<name>Y1737_BORPE</name>
<protein>
    <recommendedName>
        <fullName evidence="1">UPF0391 membrane protein BP1737</fullName>
    </recommendedName>
</protein>
<dbReference type="EMBL" id="BX640416">
    <property type="protein sequence ID" value="CAE42024.1"/>
    <property type="molecule type" value="Genomic_DNA"/>
</dbReference>
<dbReference type="RefSeq" id="NP_880451.1">
    <property type="nucleotide sequence ID" value="NC_002929.2"/>
</dbReference>
<dbReference type="RefSeq" id="WP_003813570.1">
    <property type="nucleotide sequence ID" value="NZ_CP039022.1"/>
</dbReference>
<dbReference type="KEGG" id="bpe:BP1737"/>
<dbReference type="PATRIC" id="fig|257313.5.peg.1864"/>
<dbReference type="eggNOG" id="COG5487">
    <property type="taxonomic scope" value="Bacteria"/>
</dbReference>
<dbReference type="HOGENOM" id="CLU_187346_0_1_4"/>
<dbReference type="Proteomes" id="UP000002676">
    <property type="component" value="Chromosome"/>
</dbReference>
<dbReference type="GO" id="GO:0005886">
    <property type="term" value="C:plasma membrane"/>
    <property type="evidence" value="ECO:0007669"/>
    <property type="project" value="UniProtKB-SubCell"/>
</dbReference>
<dbReference type="HAMAP" id="MF_01361">
    <property type="entry name" value="UPF0391"/>
    <property type="match status" value="1"/>
</dbReference>
<dbReference type="InterPro" id="IPR009760">
    <property type="entry name" value="DUF1328"/>
</dbReference>
<dbReference type="NCBIfam" id="NF010226">
    <property type="entry name" value="PRK13682.1-1"/>
    <property type="match status" value="1"/>
</dbReference>
<dbReference type="NCBIfam" id="NF010229">
    <property type="entry name" value="PRK13682.1-4"/>
    <property type="match status" value="1"/>
</dbReference>
<dbReference type="Pfam" id="PF07043">
    <property type="entry name" value="DUF1328"/>
    <property type="match status" value="1"/>
</dbReference>
<dbReference type="PIRSF" id="PIRSF036466">
    <property type="entry name" value="UCP036466"/>
    <property type="match status" value="1"/>
</dbReference>
<reference key="1">
    <citation type="journal article" date="2003" name="Nat. Genet.">
        <title>Comparative analysis of the genome sequences of Bordetella pertussis, Bordetella parapertussis and Bordetella bronchiseptica.</title>
        <authorList>
            <person name="Parkhill J."/>
            <person name="Sebaihia M."/>
            <person name="Preston A."/>
            <person name="Murphy L.D."/>
            <person name="Thomson N.R."/>
            <person name="Harris D.E."/>
            <person name="Holden M.T.G."/>
            <person name="Churcher C.M."/>
            <person name="Bentley S.D."/>
            <person name="Mungall K.L."/>
            <person name="Cerdeno-Tarraga A.-M."/>
            <person name="Temple L."/>
            <person name="James K.D."/>
            <person name="Harris B."/>
            <person name="Quail M.A."/>
            <person name="Achtman M."/>
            <person name="Atkin R."/>
            <person name="Baker S."/>
            <person name="Basham D."/>
            <person name="Bason N."/>
            <person name="Cherevach I."/>
            <person name="Chillingworth T."/>
            <person name="Collins M."/>
            <person name="Cronin A."/>
            <person name="Davis P."/>
            <person name="Doggett J."/>
            <person name="Feltwell T."/>
            <person name="Goble A."/>
            <person name="Hamlin N."/>
            <person name="Hauser H."/>
            <person name="Holroyd S."/>
            <person name="Jagels K."/>
            <person name="Leather S."/>
            <person name="Moule S."/>
            <person name="Norberczak H."/>
            <person name="O'Neil S."/>
            <person name="Ormond D."/>
            <person name="Price C."/>
            <person name="Rabbinowitsch E."/>
            <person name="Rutter S."/>
            <person name="Sanders M."/>
            <person name="Saunders D."/>
            <person name="Seeger K."/>
            <person name="Sharp S."/>
            <person name="Simmonds M."/>
            <person name="Skelton J."/>
            <person name="Squares R."/>
            <person name="Squares S."/>
            <person name="Stevens K."/>
            <person name="Unwin L."/>
            <person name="Whitehead S."/>
            <person name="Barrell B.G."/>
            <person name="Maskell D.J."/>
        </authorList>
    </citation>
    <scope>NUCLEOTIDE SEQUENCE [LARGE SCALE GENOMIC DNA]</scope>
    <source>
        <strain>Tohama I / ATCC BAA-589 / NCTC 13251</strain>
    </source>
</reference>
<feature type="chain" id="PRO_0000256715" description="UPF0391 membrane protein BP1737">
    <location>
        <begin position="1"/>
        <end position="53"/>
    </location>
</feature>
<feature type="transmembrane region" description="Helical" evidence="1">
    <location>
        <begin position="5"/>
        <end position="25"/>
    </location>
</feature>
<feature type="transmembrane region" description="Helical" evidence="1">
    <location>
        <begin position="30"/>
        <end position="50"/>
    </location>
</feature>
<keyword id="KW-1003">Cell membrane</keyword>
<keyword id="KW-0472">Membrane</keyword>
<keyword id="KW-1185">Reference proteome</keyword>
<keyword id="KW-0812">Transmembrane</keyword>
<keyword id="KW-1133">Transmembrane helix</keyword>
<organism>
    <name type="scientific">Bordetella pertussis (strain Tohama I / ATCC BAA-589 / NCTC 13251)</name>
    <dbReference type="NCBI Taxonomy" id="257313"/>
    <lineage>
        <taxon>Bacteria</taxon>
        <taxon>Pseudomonadati</taxon>
        <taxon>Pseudomonadota</taxon>
        <taxon>Betaproteobacteria</taxon>
        <taxon>Burkholderiales</taxon>
        <taxon>Alcaligenaceae</taxon>
        <taxon>Bordetella</taxon>
    </lineage>
</organism>
<accession>Q7VXL6</accession>
<proteinExistence type="inferred from homology"/>
<sequence>MLHYAVVFFVIAIIAAVLGFGGIAAGAAGIAKILFFVFLVLALLSILGGVFRK</sequence>
<gene>
    <name type="ordered locus">BP1737</name>
</gene>
<evidence type="ECO:0000255" key="1">
    <source>
        <dbReference type="HAMAP-Rule" id="MF_01361"/>
    </source>
</evidence>
<comment type="subcellular location">
    <subcellularLocation>
        <location evidence="1">Cell membrane</location>
        <topology evidence="1">Multi-pass membrane protein</topology>
    </subcellularLocation>
</comment>
<comment type="similarity">
    <text evidence="1">Belongs to the UPF0391 family.</text>
</comment>